<evidence type="ECO:0000255" key="1">
    <source>
        <dbReference type="HAMAP-Rule" id="MF_00712"/>
    </source>
</evidence>
<sequence length="447" mass="49421">MLHRYLPMTEEDKKEMLQTIGVQTIDELFSDIPESVRFKGDLKIKEAKSEPELLKELSQMASKNANLKEYASFLGAGVYDHYAPVIVDHVISRSEFYTAYTPYQPEISQGELQAIFEFQTMICELTGMDVANSSMYDGGTALAEAAMLAAGHTRKKKILVSSAVHPESRAVLETYAKGQHLEVVEINHKDGVTDLDVLQSEVDDTVACVIVQYPNFFGQVEKLADIEKIVHQQKSLFIVSSNPLSLGALTPPGKFGADIVIGDAQPFGIPTQFGGPHCGYFATTKAFMRKIPGRLVGQTVDSDGKRGFVLTLQAREQHIRRDKATSNICSNQALNALAASVAMTALGKQGVKEMARQNISKAQYAKRQFEAKGFTVTFAGPFFNEFVVDCKRPVKEVNDALLQKNIIGGYDLGRDYKEHENHMLVAVTELRTKEEIDTLVNEMGAIQ</sequence>
<proteinExistence type="inferred from homology"/>
<gene>
    <name evidence="1" type="primary">gcvPA</name>
    <name type="ordered locus">BCAH820_4246</name>
</gene>
<protein>
    <recommendedName>
        <fullName evidence="1">Probable glycine dehydrogenase (decarboxylating) subunit 1</fullName>
        <ecNumber evidence="1">1.4.4.2</ecNumber>
    </recommendedName>
    <alternativeName>
        <fullName evidence="1">Glycine cleavage system P-protein subunit 1</fullName>
    </alternativeName>
    <alternativeName>
        <fullName evidence="1">Glycine decarboxylase subunit 1</fullName>
    </alternativeName>
    <alternativeName>
        <fullName evidence="1">Glycine dehydrogenase (aminomethyl-transferring) subunit 1</fullName>
    </alternativeName>
</protein>
<feature type="chain" id="PRO_1000132467" description="Probable glycine dehydrogenase (decarboxylating) subunit 1">
    <location>
        <begin position="1"/>
        <end position="447"/>
    </location>
</feature>
<dbReference type="EC" id="1.4.4.2" evidence="1"/>
<dbReference type="EMBL" id="CP001283">
    <property type="protein sequence ID" value="ACK90923.1"/>
    <property type="molecule type" value="Genomic_DNA"/>
</dbReference>
<dbReference type="RefSeq" id="WP_000903231.1">
    <property type="nucleotide sequence ID" value="NC_011773.1"/>
</dbReference>
<dbReference type="SMR" id="B7JMV0"/>
<dbReference type="GeneID" id="93006874"/>
<dbReference type="KEGG" id="bcu:BCAH820_4246"/>
<dbReference type="HOGENOM" id="CLU_004620_0_2_9"/>
<dbReference type="Proteomes" id="UP000001363">
    <property type="component" value="Chromosome"/>
</dbReference>
<dbReference type="GO" id="GO:0004375">
    <property type="term" value="F:glycine dehydrogenase (decarboxylating) activity"/>
    <property type="evidence" value="ECO:0007669"/>
    <property type="project" value="UniProtKB-EC"/>
</dbReference>
<dbReference type="GO" id="GO:0019464">
    <property type="term" value="P:glycine decarboxylation via glycine cleavage system"/>
    <property type="evidence" value="ECO:0007669"/>
    <property type="project" value="UniProtKB-UniRule"/>
</dbReference>
<dbReference type="GO" id="GO:0009116">
    <property type="term" value="P:nucleoside metabolic process"/>
    <property type="evidence" value="ECO:0007669"/>
    <property type="project" value="InterPro"/>
</dbReference>
<dbReference type="CDD" id="cd00613">
    <property type="entry name" value="GDC-P"/>
    <property type="match status" value="1"/>
</dbReference>
<dbReference type="FunFam" id="3.40.640.10:FF:000113">
    <property type="entry name" value="Probable glycine dehydrogenase (decarboxylating) subunit 1"/>
    <property type="match status" value="1"/>
</dbReference>
<dbReference type="Gene3D" id="3.90.1150.10">
    <property type="entry name" value="Aspartate Aminotransferase, domain 1"/>
    <property type="match status" value="1"/>
</dbReference>
<dbReference type="Gene3D" id="3.40.640.10">
    <property type="entry name" value="Type I PLP-dependent aspartate aminotransferase-like (Major domain)"/>
    <property type="match status" value="1"/>
</dbReference>
<dbReference type="HAMAP" id="MF_00712">
    <property type="entry name" value="GcvPA"/>
    <property type="match status" value="1"/>
</dbReference>
<dbReference type="InterPro" id="IPR023010">
    <property type="entry name" value="GcvPA"/>
</dbReference>
<dbReference type="InterPro" id="IPR049315">
    <property type="entry name" value="GDC-P_N"/>
</dbReference>
<dbReference type="InterPro" id="IPR020581">
    <property type="entry name" value="GDC_P"/>
</dbReference>
<dbReference type="InterPro" id="IPR015424">
    <property type="entry name" value="PyrdxlP-dep_Trfase"/>
</dbReference>
<dbReference type="InterPro" id="IPR015421">
    <property type="entry name" value="PyrdxlP-dep_Trfase_major"/>
</dbReference>
<dbReference type="InterPro" id="IPR015422">
    <property type="entry name" value="PyrdxlP-dep_Trfase_small"/>
</dbReference>
<dbReference type="NCBIfam" id="NF001696">
    <property type="entry name" value="PRK00451.1"/>
    <property type="match status" value="1"/>
</dbReference>
<dbReference type="PANTHER" id="PTHR42806">
    <property type="entry name" value="GLYCINE CLEAVAGE SYSTEM P-PROTEIN"/>
    <property type="match status" value="1"/>
</dbReference>
<dbReference type="PANTHER" id="PTHR42806:SF1">
    <property type="entry name" value="GLYCINE DEHYDROGENASE (DECARBOXYLATING)"/>
    <property type="match status" value="1"/>
</dbReference>
<dbReference type="Pfam" id="PF02347">
    <property type="entry name" value="GDC-P"/>
    <property type="match status" value="1"/>
</dbReference>
<dbReference type="PIRSF" id="PIRSF006815">
    <property type="entry name" value="GcvPA"/>
    <property type="match status" value="1"/>
</dbReference>
<dbReference type="SUPFAM" id="SSF53383">
    <property type="entry name" value="PLP-dependent transferases"/>
    <property type="match status" value="1"/>
</dbReference>
<accession>B7JMV0</accession>
<comment type="function">
    <text evidence="1">The glycine cleavage system catalyzes the degradation of glycine. The P protein binds the alpha-amino group of glycine through its pyridoxal phosphate cofactor; CO(2) is released and the remaining methylamine moiety is then transferred to the lipoamide cofactor of the H protein.</text>
</comment>
<comment type="catalytic activity">
    <reaction evidence="1">
        <text>N(6)-[(R)-lipoyl]-L-lysyl-[glycine-cleavage complex H protein] + glycine + H(+) = N(6)-[(R)-S(8)-aminomethyldihydrolipoyl]-L-lysyl-[glycine-cleavage complex H protein] + CO2</text>
        <dbReference type="Rhea" id="RHEA:24304"/>
        <dbReference type="Rhea" id="RHEA-COMP:10494"/>
        <dbReference type="Rhea" id="RHEA-COMP:10495"/>
        <dbReference type="ChEBI" id="CHEBI:15378"/>
        <dbReference type="ChEBI" id="CHEBI:16526"/>
        <dbReference type="ChEBI" id="CHEBI:57305"/>
        <dbReference type="ChEBI" id="CHEBI:83099"/>
        <dbReference type="ChEBI" id="CHEBI:83143"/>
        <dbReference type="EC" id="1.4.4.2"/>
    </reaction>
</comment>
<comment type="subunit">
    <text evidence="1">The glycine cleavage system is composed of four proteins: P, T, L and H. In this organism, the P 'protein' is a heterodimer of two subunits.</text>
</comment>
<comment type="similarity">
    <text evidence="1">Belongs to the GcvP family. N-terminal subunit subfamily.</text>
</comment>
<keyword id="KW-0560">Oxidoreductase</keyword>
<organism>
    <name type="scientific">Bacillus cereus (strain AH820)</name>
    <dbReference type="NCBI Taxonomy" id="405535"/>
    <lineage>
        <taxon>Bacteria</taxon>
        <taxon>Bacillati</taxon>
        <taxon>Bacillota</taxon>
        <taxon>Bacilli</taxon>
        <taxon>Bacillales</taxon>
        <taxon>Bacillaceae</taxon>
        <taxon>Bacillus</taxon>
        <taxon>Bacillus cereus group</taxon>
    </lineage>
</organism>
<name>GCSPA_BACC0</name>
<reference key="1">
    <citation type="submission" date="2008-10" db="EMBL/GenBank/DDBJ databases">
        <title>Genome sequence of Bacillus cereus AH820.</title>
        <authorList>
            <person name="Dodson R.J."/>
            <person name="Durkin A.S."/>
            <person name="Rosovitz M.J."/>
            <person name="Rasko D.A."/>
            <person name="Hoffmaster A."/>
            <person name="Ravel J."/>
            <person name="Sutton G."/>
        </authorList>
    </citation>
    <scope>NUCLEOTIDE SEQUENCE [LARGE SCALE GENOMIC DNA]</scope>
    <source>
        <strain>AH820</strain>
    </source>
</reference>